<name>WCAL_ECOLI</name>
<sequence length="406" mass="45362">MKVGFFLLKFPLSSETFVLNQITAFIDMGFEVEILALQKGDTQNTHAAWTKYNLAARTRWLQDEPTGKVAKLRHRASQTLRGIHRKNTWQALNLKRYGAESRNLILSAICGQVATPFRADVFIAHFGPAGVTAAKLRELGVIRGKIATIFHGIDISSREVLNHYTPEYQQLFRRGDLMLPISDLWAGRLQKMGCPREKIAVSRMGVDMTRFSPRPVKAPATPLEIISVARLTEKKGLHVAIEACRQLKEQGVAFRYRILGIGPWERRLRTLIEQYQLEDVVEMPGFKPSHEVKAMLDDADVFLLPSVTGADGDMEGIPVALMEAMAVGIPVVSTLHSGIPELVEADKSGWLVPENDARALAQRLAAFSQLDTDELAPVVKRAREKVEHDFNQQVINRELASLLQAL</sequence>
<comment type="pathway">
    <text>Slime biogenesis; slime polysaccharide biosynthesis.</text>
</comment>
<comment type="similarity">
    <text evidence="1">Belongs to the glycosyltransferase group 1 family. Glycosyltransferase 4 subfamily.</text>
</comment>
<gene>
    <name type="primary">wcaL</name>
    <name type="synonym">yefL</name>
    <name type="ordered locus">b2044</name>
    <name type="ordered locus">JW2029</name>
</gene>
<proteinExistence type="inferred from homology"/>
<accession>P71243</accession>
<accession>P76379</accession>
<organism>
    <name type="scientific">Escherichia coli (strain K12)</name>
    <dbReference type="NCBI Taxonomy" id="83333"/>
    <lineage>
        <taxon>Bacteria</taxon>
        <taxon>Pseudomonadati</taxon>
        <taxon>Pseudomonadota</taxon>
        <taxon>Gammaproteobacteria</taxon>
        <taxon>Enterobacterales</taxon>
        <taxon>Enterobacteriaceae</taxon>
        <taxon>Escherichia</taxon>
    </lineage>
</organism>
<feature type="chain" id="PRO_0000080311" description="Putative colanic acid biosynthesis glycosyltransferase WcaL">
    <location>
        <begin position="1"/>
        <end position="406"/>
    </location>
</feature>
<feature type="sequence conflict" description="In Ref. 2; AAC77851." evidence="1" ref="2">
    <original>F</original>
    <variation>Y</variation>
    <location>
        <position position="126"/>
    </location>
</feature>
<feature type="sequence conflict" description="In Ref. 2; AAC77851." evidence="1" ref="2">
    <original>A</original>
    <variation>T</variation>
    <location>
        <position position="129"/>
    </location>
</feature>
<feature type="sequence conflict" description="In Ref. 2; AAC77851." evidence="1" ref="2">
    <original>G</original>
    <variation>A</variation>
    <location>
        <position position="144"/>
    </location>
</feature>
<feature type="sequence conflict" description="In Ref. 2; AAC77851." evidence="1" ref="2">
    <original>G</original>
    <variation>A</variation>
    <location>
        <position position="205"/>
    </location>
</feature>
<keyword id="KW-0328">Glycosyltransferase</keyword>
<keyword id="KW-0448">Lipopolysaccharide biosynthesis</keyword>
<keyword id="KW-1185">Reference proteome</keyword>
<keyword id="KW-0808">Transferase</keyword>
<evidence type="ECO:0000305" key="1"/>
<dbReference type="EC" id="2.4.-.-"/>
<dbReference type="EMBL" id="U38473">
    <property type="protein sequence ID" value="AAC77851.1"/>
    <property type="molecule type" value="Genomic_DNA"/>
</dbReference>
<dbReference type="EMBL" id="U00096">
    <property type="protein sequence ID" value="AAC75105.1"/>
    <property type="molecule type" value="Genomic_DNA"/>
</dbReference>
<dbReference type="EMBL" id="AP009048">
    <property type="protein sequence ID" value="BAA15898.1"/>
    <property type="molecule type" value="Genomic_DNA"/>
</dbReference>
<dbReference type="PIR" id="C64970">
    <property type="entry name" value="C64970"/>
</dbReference>
<dbReference type="RefSeq" id="NP_416548.1">
    <property type="nucleotide sequence ID" value="NC_000913.3"/>
</dbReference>
<dbReference type="RefSeq" id="WP_000862592.1">
    <property type="nucleotide sequence ID" value="NZ_LN832404.1"/>
</dbReference>
<dbReference type="SMR" id="P71243"/>
<dbReference type="BioGRID" id="4259676">
    <property type="interactions" value="168"/>
</dbReference>
<dbReference type="DIP" id="DIP-11127N"/>
<dbReference type="FunCoup" id="P71243">
    <property type="interactions" value="349"/>
</dbReference>
<dbReference type="IntAct" id="P71243">
    <property type="interactions" value="1"/>
</dbReference>
<dbReference type="STRING" id="511145.b2044"/>
<dbReference type="CAZy" id="GT4">
    <property type="family name" value="Glycosyltransferase Family 4"/>
</dbReference>
<dbReference type="PaxDb" id="511145-b2044"/>
<dbReference type="DNASU" id="946565"/>
<dbReference type="EnsemblBacteria" id="AAC75105">
    <property type="protein sequence ID" value="AAC75105"/>
    <property type="gene ID" value="b2044"/>
</dbReference>
<dbReference type="GeneID" id="946565"/>
<dbReference type="KEGG" id="ecj:JW2029"/>
<dbReference type="KEGG" id="eco:b2044"/>
<dbReference type="KEGG" id="ecoc:C3026_11510"/>
<dbReference type="PATRIC" id="fig|1411691.4.peg.207"/>
<dbReference type="EchoBASE" id="EB2522"/>
<dbReference type="eggNOG" id="COG0438">
    <property type="taxonomic scope" value="Bacteria"/>
</dbReference>
<dbReference type="HOGENOM" id="CLU_009583_14_3_6"/>
<dbReference type="InParanoid" id="P71243"/>
<dbReference type="OMA" id="RIALRGW"/>
<dbReference type="OrthoDB" id="4611853at2"/>
<dbReference type="PhylomeDB" id="P71243"/>
<dbReference type="BioCyc" id="EcoCyc:G7095-MONOMER"/>
<dbReference type="UniPathway" id="UPA00936"/>
<dbReference type="PRO" id="PR:P71243"/>
<dbReference type="Proteomes" id="UP000000625">
    <property type="component" value="Chromosome"/>
</dbReference>
<dbReference type="GO" id="GO:0016757">
    <property type="term" value="F:glycosyltransferase activity"/>
    <property type="evidence" value="ECO:0000318"/>
    <property type="project" value="GO_Central"/>
</dbReference>
<dbReference type="GO" id="GO:0046377">
    <property type="term" value="P:colanic acid metabolic process"/>
    <property type="evidence" value="ECO:0000315"/>
    <property type="project" value="EcoCyc"/>
</dbReference>
<dbReference type="GO" id="GO:0009103">
    <property type="term" value="P:lipopolysaccharide biosynthetic process"/>
    <property type="evidence" value="ECO:0007669"/>
    <property type="project" value="UniProtKB-KW"/>
</dbReference>
<dbReference type="GO" id="GO:0045228">
    <property type="term" value="P:slime layer polysaccharide biosynthetic process"/>
    <property type="evidence" value="ECO:0007669"/>
    <property type="project" value="UniProtKB-UniPathway"/>
</dbReference>
<dbReference type="Gene3D" id="3.40.50.2000">
    <property type="entry name" value="Glycogen Phosphorylase B"/>
    <property type="match status" value="2"/>
</dbReference>
<dbReference type="InterPro" id="IPR023884">
    <property type="entry name" value="Colanic_acid_synth_WcaL"/>
</dbReference>
<dbReference type="InterPro" id="IPR001296">
    <property type="entry name" value="Glyco_trans_1"/>
</dbReference>
<dbReference type="NCBIfam" id="TIGR04005">
    <property type="entry name" value="wcaL"/>
    <property type="match status" value="1"/>
</dbReference>
<dbReference type="PANTHER" id="PTHR12526:SF640">
    <property type="entry name" value="COLANIC ACID BIOSYNTHESIS GLYCOSYLTRANSFERASE WCAL-RELATED"/>
    <property type="match status" value="1"/>
</dbReference>
<dbReference type="PANTHER" id="PTHR12526">
    <property type="entry name" value="GLYCOSYLTRANSFERASE"/>
    <property type="match status" value="1"/>
</dbReference>
<dbReference type="Pfam" id="PF00534">
    <property type="entry name" value="Glycos_transf_1"/>
    <property type="match status" value="1"/>
</dbReference>
<dbReference type="SUPFAM" id="SSF53756">
    <property type="entry name" value="UDP-Glycosyltransferase/glycogen phosphorylase"/>
    <property type="match status" value="1"/>
</dbReference>
<reference key="1">
    <citation type="journal article" date="1996" name="J. Bacteriol.">
        <title>Organization of the Escherichia coli K-12 gene cluster responsible for production of the extracellular polysaccharide colanic acid.</title>
        <authorList>
            <person name="Stevenson G."/>
            <person name="Andrianopoulos K."/>
            <person name="Hobbs M."/>
            <person name="Reeves P.R."/>
        </authorList>
    </citation>
    <scope>NUCLEOTIDE SEQUENCE [GENOMIC DNA]</scope>
    <source>
        <strain>K12</strain>
    </source>
</reference>
<reference key="2">
    <citation type="submission" date="1998-04" db="EMBL/GenBank/DDBJ databases">
        <authorList>
            <person name="Reeves P.R."/>
        </authorList>
    </citation>
    <scope>SEQUENCE REVISION</scope>
    <source>
        <strain>K12</strain>
    </source>
</reference>
<reference key="3">
    <citation type="journal article" date="1996" name="DNA Res.">
        <title>A 460-kb DNA sequence of the Escherichia coli K-12 genome corresponding to the 40.1-50.0 min region on the linkage map.</title>
        <authorList>
            <person name="Itoh T."/>
            <person name="Aiba H."/>
            <person name="Baba T."/>
            <person name="Fujita K."/>
            <person name="Hayashi K."/>
            <person name="Inada T."/>
            <person name="Isono K."/>
            <person name="Kasai H."/>
            <person name="Kimura S."/>
            <person name="Kitakawa M."/>
            <person name="Kitagawa M."/>
            <person name="Makino K."/>
            <person name="Miki T."/>
            <person name="Mizobuchi K."/>
            <person name="Mori H."/>
            <person name="Mori T."/>
            <person name="Motomura K."/>
            <person name="Nakade S."/>
            <person name="Nakamura Y."/>
            <person name="Nashimoto H."/>
            <person name="Nishio Y."/>
            <person name="Oshima T."/>
            <person name="Saito N."/>
            <person name="Sampei G."/>
            <person name="Seki Y."/>
            <person name="Sivasundaram S."/>
            <person name="Tagami H."/>
            <person name="Takeda J."/>
            <person name="Takemoto K."/>
            <person name="Wada C."/>
            <person name="Yamamoto Y."/>
            <person name="Horiuchi T."/>
        </authorList>
    </citation>
    <scope>NUCLEOTIDE SEQUENCE [LARGE SCALE GENOMIC DNA]</scope>
    <source>
        <strain>K12 / W3110 / ATCC 27325 / DSM 5911</strain>
    </source>
</reference>
<reference key="4">
    <citation type="journal article" date="1997" name="Science">
        <title>The complete genome sequence of Escherichia coli K-12.</title>
        <authorList>
            <person name="Blattner F.R."/>
            <person name="Plunkett G. III"/>
            <person name="Bloch C.A."/>
            <person name="Perna N.T."/>
            <person name="Burland V."/>
            <person name="Riley M."/>
            <person name="Collado-Vides J."/>
            <person name="Glasner J.D."/>
            <person name="Rode C.K."/>
            <person name="Mayhew G.F."/>
            <person name="Gregor J."/>
            <person name="Davis N.W."/>
            <person name="Kirkpatrick H.A."/>
            <person name="Goeden M.A."/>
            <person name="Rose D.J."/>
            <person name="Mau B."/>
            <person name="Shao Y."/>
        </authorList>
    </citation>
    <scope>NUCLEOTIDE SEQUENCE [LARGE SCALE GENOMIC DNA]</scope>
    <source>
        <strain>K12 / MG1655 / ATCC 47076</strain>
    </source>
</reference>
<reference key="5">
    <citation type="journal article" date="2006" name="Mol. Syst. Biol.">
        <title>Highly accurate genome sequences of Escherichia coli K-12 strains MG1655 and W3110.</title>
        <authorList>
            <person name="Hayashi K."/>
            <person name="Morooka N."/>
            <person name="Yamamoto Y."/>
            <person name="Fujita K."/>
            <person name="Isono K."/>
            <person name="Choi S."/>
            <person name="Ohtsubo E."/>
            <person name="Baba T."/>
            <person name="Wanner B.L."/>
            <person name="Mori H."/>
            <person name="Horiuchi T."/>
        </authorList>
    </citation>
    <scope>NUCLEOTIDE SEQUENCE [LARGE SCALE GENOMIC DNA]</scope>
    <source>
        <strain>K12 / W3110 / ATCC 27325 / DSM 5911</strain>
    </source>
</reference>
<protein>
    <recommendedName>
        <fullName>Putative colanic acid biosynthesis glycosyltransferase WcaL</fullName>
        <ecNumber>2.4.-.-</ecNumber>
    </recommendedName>
</protein>